<feature type="chain" id="PRO_0000366000" description="Eukaryotic translation initiation factor 3 subunit M">
    <location>
        <begin position="1"/>
        <end position="387"/>
    </location>
</feature>
<feature type="domain" description="PCI" evidence="2">
    <location>
        <begin position="181"/>
        <end position="340"/>
    </location>
</feature>
<comment type="function">
    <text evidence="1">Component of the eukaryotic translation initiation factor 3 (eIF-3) complex, which is involved in protein synthesis of a specialized repertoire of mRNAs and, together with other initiation factors, stimulates binding of mRNA and methionyl-tRNAi to the 40S ribosome. The eIF-3 complex specifically targets and initiates translation of a subset of mRNAs involved in cell proliferation.</text>
</comment>
<comment type="subunit">
    <text evidence="1">Component of the eukaryotic translation initiation factor 3 (eIF-3) complex. The eIF-3 complex interacts with pix.</text>
</comment>
<comment type="subcellular location">
    <subcellularLocation>
        <location evidence="1">Cytoplasm</location>
    </subcellularLocation>
    <subcellularLocation>
        <location evidence="1">Golgi apparatus</location>
    </subcellularLocation>
</comment>
<comment type="similarity">
    <text evidence="1">Belongs to the eIF-3 subunit M family.</text>
</comment>
<gene>
    <name evidence="1" type="primary">Tango7</name>
    <name type="ORF">GH22989</name>
</gene>
<evidence type="ECO:0000255" key="1">
    <source>
        <dbReference type="HAMAP-Rule" id="MF_03012"/>
    </source>
</evidence>
<evidence type="ECO:0000255" key="2">
    <source>
        <dbReference type="PROSITE-ProRule" id="PRU01185"/>
    </source>
</evidence>
<protein>
    <recommendedName>
        <fullName evidence="1">Eukaryotic translation initiation factor 3 subunit M</fullName>
        <shortName evidence="1">eIF3m</shortName>
    </recommendedName>
    <alternativeName>
        <fullName evidence="1">Transport and Golgi organization protein 7</fullName>
        <shortName evidence="1">Tango-7</shortName>
    </alternativeName>
</protein>
<reference key="1">
    <citation type="journal article" date="2007" name="Nature">
        <title>Evolution of genes and genomes on the Drosophila phylogeny.</title>
        <authorList>
            <consortium name="Drosophila 12 genomes consortium"/>
        </authorList>
    </citation>
    <scope>NUCLEOTIDE SEQUENCE [LARGE SCALE GENOMIC DNA]</scope>
    <source>
        <strain>Tucson 15287-2541.00</strain>
    </source>
</reference>
<organism>
    <name type="scientific">Drosophila grimshawi</name>
    <name type="common">Hawaiian fruit fly</name>
    <name type="synonym">Idiomyia grimshawi</name>
    <dbReference type="NCBI Taxonomy" id="7222"/>
    <lineage>
        <taxon>Eukaryota</taxon>
        <taxon>Metazoa</taxon>
        <taxon>Ecdysozoa</taxon>
        <taxon>Arthropoda</taxon>
        <taxon>Hexapoda</taxon>
        <taxon>Insecta</taxon>
        <taxon>Pterygota</taxon>
        <taxon>Neoptera</taxon>
        <taxon>Endopterygota</taxon>
        <taxon>Diptera</taxon>
        <taxon>Brachycera</taxon>
        <taxon>Muscomorpha</taxon>
        <taxon>Ephydroidea</taxon>
        <taxon>Drosophilidae</taxon>
        <taxon>Drosophila</taxon>
        <taxon>Hawaiian Drosophila</taxon>
    </lineage>
</organism>
<dbReference type="EMBL" id="CH916375">
    <property type="protein sequence ID" value="EDV98221.1"/>
    <property type="molecule type" value="Genomic_DNA"/>
</dbReference>
<dbReference type="SMR" id="B4JW83"/>
<dbReference type="FunCoup" id="B4JW83">
    <property type="interactions" value="2283"/>
</dbReference>
<dbReference type="STRING" id="7222.B4JW83"/>
<dbReference type="EnsemblMetazoa" id="FBtr0158403">
    <property type="protein sequence ID" value="FBpp0156895"/>
    <property type="gene ID" value="FBgn0130446"/>
</dbReference>
<dbReference type="EnsemblMetazoa" id="XM_001995113.2">
    <property type="protein sequence ID" value="XP_001995149.1"/>
    <property type="gene ID" value="LOC6569133"/>
</dbReference>
<dbReference type="GeneID" id="6569133"/>
<dbReference type="KEGG" id="dgr:6569133"/>
<dbReference type="CTD" id="10480"/>
<dbReference type="eggNOG" id="KOG2753">
    <property type="taxonomic scope" value="Eukaryota"/>
</dbReference>
<dbReference type="HOGENOM" id="CLU_035254_1_0_1"/>
<dbReference type="InParanoid" id="B4JW83"/>
<dbReference type="OMA" id="VCLKALW"/>
<dbReference type="OrthoDB" id="7900529at2759"/>
<dbReference type="PhylomeDB" id="B4JW83"/>
<dbReference type="Proteomes" id="UP000001070">
    <property type="component" value="Unassembled WGS sequence"/>
</dbReference>
<dbReference type="GO" id="GO:0016282">
    <property type="term" value="C:eukaryotic 43S preinitiation complex"/>
    <property type="evidence" value="ECO:0007669"/>
    <property type="project" value="UniProtKB-UniRule"/>
</dbReference>
<dbReference type="GO" id="GO:0033290">
    <property type="term" value="C:eukaryotic 48S preinitiation complex"/>
    <property type="evidence" value="ECO:0007669"/>
    <property type="project" value="UniProtKB-UniRule"/>
</dbReference>
<dbReference type="GO" id="GO:0071541">
    <property type="term" value="C:eukaryotic translation initiation factor 3 complex, eIF3m"/>
    <property type="evidence" value="ECO:0007669"/>
    <property type="project" value="UniProtKB-UniRule"/>
</dbReference>
<dbReference type="GO" id="GO:0005794">
    <property type="term" value="C:Golgi apparatus"/>
    <property type="evidence" value="ECO:0007669"/>
    <property type="project" value="UniProtKB-SubCell"/>
</dbReference>
<dbReference type="GO" id="GO:0003743">
    <property type="term" value="F:translation initiation factor activity"/>
    <property type="evidence" value="ECO:0007669"/>
    <property type="project" value="UniProtKB-UniRule"/>
</dbReference>
<dbReference type="GO" id="GO:0001732">
    <property type="term" value="P:formation of cytoplasmic translation initiation complex"/>
    <property type="evidence" value="ECO:0007669"/>
    <property type="project" value="UniProtKB-UniRule"/>
</dbReference>
<dbReference type="HAMAP" id="MF_03012">
    <property type="entry name" value="eIF3m"/>
    <property type="match status" value="1"/>
</dbReference>
<dbReference type="InterPro" id="IPR016024">
    <property type="entry name" value="ARM-type_fold"/>
</dbReference>
<dbReference type="InterPro" id="IPR045237">
    <property type="entry name" value="COPS7/eIF3m"/>
</dbReference>
<dbReference type="InterPro" id="IPR027528">
    <property type="entry name" value="eIF3m"/>
</dbReference>
<dbReference type="InterPro" id="IPR040750">
    <property type="entry name" value="eIF3m_C_helix"/>
</dbReference>
<dbReference type="InterPro" id="IPR000717">
    <property type="entry name" value="PCI_dom"/>
</dbReference>
<dbReference type="InterPro" id="IPR036390">
    <property type="entry name" value="WH_DNA-bd_sf"/>
</dbReference>
<dbReference type="PANTHER" id="PTHR15350">
    <property type="entry name" value="COP9 SIGNALOSOME COMPLEX SUBUNIT 7/DENDRITIC CELL PROTEIN GA17"/>
    <property type="match status" value="1"/>
</dbReference>
<dbReference type="PANTHER" id="PTHR15350:SF2">
    <property type="entry name" value="EUKARYOTIC TRANSLATION INITIATION FACTOR 3 SUBUNIT M"/>
    <property type="match status" value="1"/>
</dbReference>
<dbReference type="Pfam" id="PF18005">
    <property type="entry name" value="eIF3m_C_helix"/>
    <property type="match status" value="1"/>
</dbReference>
<dbReference type="Pfam" id="PF01399">
    <property type="entry name" value="PCI"/>
    <property type="match status" value="1"/>
</dbReference>
<dbReference type="SMART" id="SM00088">
    <property type="entry name" value="PINT"/>
    <property type="match status" value="1"/>
</dbReference>
<dbReference type="SUPFAM" id="SSF48371">
    <property type="entry name" value="ARM repeat"/>
    <property type="match status" value="1"/>
</dbReference>
<dbReference type="SUPFAM" id="SSF46785">
    <property type="entry name" value="Winged helix' DNA-binding domain"/>
    <property type="match status" value="1"/>
</dbReference>
<dbReference type="PROSITE" id="PS50250">
    <property type="entry name" value="PCI"/>
    <property type="match status" value="1"/>
</dbReference>
<keyword id="KW-0963">Cytoplasm</keyword>
<keyword id="KW-0333">Golgi apparatus</keyword>
<keyword id="KW-0396">Initiation factor</keyword>
<keyword id="KW-0648">Protein biosynthesis</keyword>
<keyword id="KW-1185">Reference proteome</keyword>
<sequence length="387" mass="44117">MASHPVFIDLSLDEQVQELRKFFKKLGAEISSEKSNKGVEDDLHKIIGVCEVCFKDGEPAQIDGILNSIVSIMITIPLDRGENIVLAYCEKMTKAPNQPLAKVCLQSLWRLFNNLDTASPLRYHVYYHLVQVAKQCDQVLEVFTGVDQLKSQFANCPPSSEQMQKLYRLLHDVTKDTNLELSSKVMIELLGTYTADNACVAREDAMKCIVTALADPNTFLLDPLLSLKPVRFLEGDLIHDLLSIFVSDKLPSYVQFYEDHKEFVNSQGLNHDQNMKKMRLLTFMQLAESYPEMSFDTLTKELQINDDEVEPFVIEVLKTKLVRARLDQANRKVHISSTMHRTFGAPQWEQLRDLLQAWKENLSSVREGLTNVSSAQLDLARTQKLIH</sequence>
<proteinExistence type="inferred from homology"/>
<accession>B4JW83</accession>
<name>EIF3M_DROGR</name>